<reference evidence="8" key="1">
    <citation type="journal article" date="2000" name="Biochim. Biophys. Acta">
        <title>Molecular characterization of Drosophila melanogaster myo-inositol-1-phosphate synthase.</title>
        <authorList>
            <person name="Park D."/>
            <person name="Jeong S."/>
            <person name="Lee S."/>
            <person name="Park S."/>
            <person name="Kim J.-I."/>
            <person name="Yim J."/>
        </authorList>
    </citation>
    <scope>NUCLEOTIDE SEQUENCE [MRNA]</scope>
    <scope>FUNCTION</scope>
    <scope>CATALYTIC ACTIVITY</scope>
    <scope>TISSUE SPECIFICITY</scope>
    <source>
        <strain>Oregon-R</strain>
    </source>
</reference>
<reference evidence="8" key="2">
    <citation type="journal article" date="2000" name="Science">
        <title>The genome sequence of Drosophila melanogaster.</title>
        <authorList>
            <person name="Adams M.D."/>
            <person name="Celniker S.E."/>
            <person name="Holt R.A."/>
            <person name="Evans C.A."/>
            <person name="Gocayne J.D."/>
            <person name="Amanatides P.G."/>
            <person name="Scherer S.E."/>
            <person name="Li P.W."/>
            <person name="Hoskins R.A."/>
            <person name="Galle R.F."/>
            <person name="George R.A."/>
            <person name="Lewis S.E."/>
            <person name="Richards S."/>
            <person name="Ashburner M."/>
            <person name="Henderson S.N."/>
            <person name="Sutton G.G."/>
            <person name="Wortman J.R."/>
            <person name="Yandell M.D."/>
            <person name="Zhang Q."/>
            <person name="Chen L.X."/>
            <person name="Brandon R.C."/>
            <person name="Rogers Y.-H.C."/>
            <person name="Blazej R.G."/>
            <person name="Champe M."/>
            <person name="Pfeiffer B.D."/>
            <person name="Wan K.H."/>
            <person name="Doyle C."/>
            <person name="Baxter E.G."/>
            <person name="Helt G."/>
            <person name="Nelson C.R."/>
            <person name="Miklos G.L.G."/>
            <person name="Abril J.F."/>
            <person name="Agbayani A."/>
            <person name="An H.-J."/>
            <person name="Andrews-Pfannkoch C."/>
            <person name="Baldwin D."/>
            <person name="Ballew R.M."/>
            <person name="Basu A."/>
            <person name="Baxendale J."/>
            <person name="Bayraktaroglu L."/>
            <person name="Beasley E.M."/>
            <person name="Beeson K.Y."/>
            <person name="Benos P.V."/>
            <person name="Berman B.P."/>
            <person name="Bhandari D."/>
            <person name="Bolshakov S."/>
            <person name="Borkova D."/>
            <person name="Botchan M.R."/>
            <person name="Bouck J."/>
            <person name="Brokstein P."/>
            <person name="Brottier P."/>
            <person name="Burtis K.C."/>
            <person name="Busam D.A."/>
            <person name="Butler H."/>
            <person name="Cadieu E."/>
            <person name="Center A."/>
            <person name="Chandra I."/>
            <person name="Cherry J.M."/>
            <person name="Cawley S."/>
            <person name="Dahlke C."/>
            <person name="Davenport L.B."/>
            <person name="Davies P."/>
            <person name="de Pablos B."/>
            <person name="Delcher A."/>
            <person name="Deng Z."/>
            <person name="Mays A.D."/>
            <person name="Dew I."/>
            <person name="Dietz S.M."/>
            <person name="Dodson K."/>
            <person name="Doup L.E."/>
            <person name="Downes M."/>
            <person name="Dugan-Rocha S."/>
            <person name="Dunkov B.C."/>
            <person name="Dunn P."/>
            <person name="Durbin K.J."/>
            <person name="Evangelista C.C."/>
            <person name="Ferraz C."/>
            <person name="Ferriera S."/>
            <person name="Fleischmann W."/>
            <person name="Fosler C."/>
            <person name="Gabrielian A.E."/>
            <person name="Garg N.S."/>
            <person name="Gelbart W.M."/>
            <person name="Glasser K."/>
            <person name="Glodek A."/>
            <person name="Gong F."/>
            <person name="Gorrell J.H."/>
            <person name="Gu Z."/>
            <person name="Guan P."/>
            <person name="Harris M."/>
            <person name="Harris N.L."/>
            <person name="Harvey D.A."/>
            <person name="Heiman T.J."/>
            <person name="Hernandez J.R."/>
            <person name="Houck J."/>
            <person name="Hostin D."/>
            <person name="Houston K.A."/>
            <person name="Howland T.J."/>
            <person name="Wei M.-H."/>
            <person name="Ibegwam C."/>
            <person name="Jalali M."/>
            <person name="Kalush F."/>
            <person name="Karpen G.H."/>
            <person name="Ke Z."/>
            <person name="Kennison J.A."/>
            <person name="Ketchum K.A."/>
            <person name="Kimmel B.E."/>
            <person name="Kodira C.D."/>
            <person name="Kraft C.L."/>
            <person name="Kravitz S."/>
            <person name="Kulp D."/>
            <person name="Lai Z."/>
            <person name="Lasko P."/>
            <person name="Lei Y."/>
            <person name="Levitsky A.A."/>
            <person name="Li J.H."/>
            <person name="Li Z."/>
            <person name="Liang Y."/>
            <person name="Lin X."/>
            <person name="Liu X."/>
            <person name="Mattei B."/>
            <person name="McIntosh T.C."/>
            <person name="McLeod M.P."/>
            <person name="McPherson D."/>
            <person name="Merkulov G."/>
            <person name="Milshina N.V."/>
            <person name="Mobarry C."/>
            <person name="Morris J."/>
            <person name="Moshrefi A."/>
            <person name="Mount S.M."/>
            <person name="Moy M."/>
            <person name="Murphy B."/>
            <person name="Murphy L."/>
            <person name="Muzny D.M."/>
            <person name="Nelson D.L."/>
            <person name="Nelson D.R."/>
            <person name="Nelson K.A."/>
            <person name="Nixon K."/>
            <person name="Nusskern D.R."/>
            <person name="Pacleb J.M."/>
            <person name="Palazzolo M."/>
            <person name="Pittman G.S."/>
            <person name="Pan S."/>
            <person name="Pollard J."/>
            <person name="Puri V."/>
            <person name="Reese M.G."/>
            <person name="Reinert K."/>
            <person name="Remington K."/>
            <person name="Saunders R.D.C."/>
            <person name="Scheeler F."/>
            <person name="Shen H."/>
            <person name="Shue B.C."/>
            <person name="Siden-Kiamos I."/>
            <person name="Simpson M."/>
            <person name="Skupski M.P."/>
            <person name="Smith T.J."/>
            <person name="Spier E."/>
            <person name="Spradling A.C."/>
            <person name="Stapleton M."/>
            <person name="Strong R."/>
            <person name="Sun E."/>
            <person name="Svirskas R."/>
            <person name="Tector C."/>
            <person name="Turner R."/>
            <person name="Venter E."/>
            <person name="Wang A.H."/>
            <person name="Wang X."/>
            <person name="Wang Z.-Y."/>
            <person name="Wassarman D.A."/>
            <person name="Weinstock G.M."/>
            <person name="Weissenbach J."/>
            <person name="Williams S.M."/>
            <person name="Woodage T."/>
            <person name="Worley K.C."/>
            <person name="Wu D."/>
            <person name="Yang S."/>
            <person name="Yao Q.A."/>
            <person name="Ye J."/>
            <person name="Yeh R.-F."/>
            <person name="Zaveri J.S."/>
            <person name="Zhan M."/>
            <person name="Zhang G."/>
            <person name="Zhao Q."/>
            <person name="Zheng L."/>
            <person name="Zheng X.H."/>
            <person name="Zhong F.N."/>
            <person name="Zhong W."/>
            <person name="Zhou X."/>
            <person name="Zhu S.C."/>
            <person name="Zhu X."/>
            <person name="Smith H.O."/>
            <person name="Gibbs R.A."/>
            <person name="Myers E.W."/>
            <person name="Rubin G.M."/>
            <person name="Venter J.C."/>
        </authorList>
    </citation>
    <scope>NUCLEOTIDE SEQUENCE [LARGE SCALE GENOMIC DNA]</scope>
    <source>
        <strain evidence="4">Berkeley</strain>
    </source>
</reference>
<reference key="3">
    <citation type="journal article" date="2002" name="Genome Biol.">
        <title>Annotation of the Drosophila melanogaster euchromatic genome: a systematic review.</title>
        <authorList>
            <person name="Misra S."/>
            <person name="Crosby M.A."/>
            <person name="Mungall C.J."/>
            <person name="Matthews B.B."/>
            <person name="Campbell K.S."/>
            <person name="Hradecky P."/>
            <person name="Huang Y."/>
            <person name="Kaminker J.S."/>
            <person name="Millburn G.H."/>
            <person name="Prochnik S.E."/>
            <person name="Smith C.D."/>
            <person name="Tupy J.L."/>
            <person name="Whitfield E.J."/>
            <person name="Bayraktaroglu L."/>
            <person name="Berman B.P."/>
            <person name="Bettencourt B.R."/>
            <person name="Celniker S.E."/>
            <person name="de Grey A.D.N.J."/>
            <person name="Drysdale R.A."/>
            <person name="Harris N.L."/>
            <person name="Richter J."/>
            <person name="Russo S."/>
            <person name="Schroeder A.J."/>
            <person name="Shu S.Q."/>
            <person name="Stapleton M."/>
            <person name="Yamada C."/>
            <person name="Ashburner M."/>
            <person name="Gelbart W.M."/>
            <person name="Rubin G.M."/>
            <person name="Lewis S.E."/>
        </authorList>
    </citation>
    <scope>GENOME REANNOTATION</scope>
    <source>
        <strain>Berkeley</strain>
    </source>
</reference>
<reference evidence="8" key="4">
    <citation type="journal article" date="2002" name="Genome Biol.">
        <title>A Drosophila full-length cDNA resource.</title>
        <authorList>
            <person name="Stapleton M."/>
            <person name="Carlson J.W."/>
            <person name="Brokstein P."/>
            <person name="Yu C."/>
            <person name="Champe M."/>
            <person name="George R.A."/>
            <person name="Guarin H."/>
            <person name="Kronmiller B."/>
            <person name="Pacleb J.M."/>
            <person name="Park S."/>
            <person name="Wan K.H."/>
            <person name="Rubin G.M."/>
            <person name="Celniker S.E."/>
        </authorList>
    </citation>
    <scope>NUCLEOTIDE SEQUENCE [LARGE SCALE MRNA]</scope>
    <source>
        <strain evidence="6">Berkeley</strain>
        <tissue evidence="6">Embryo</tissue>
        <tissue evidence="6">Head</tissue>
        <tissue evidence="6">Ovary</tissue>
    </source>
</reference>
<reference key="5">
    <citation type="journal article" date="2007" name="Mol. Biosyst.">
        <title>An integrated chemical, mass spectrometric and computational strategy for (quantitative) phosphoproteomics: application to Drosophila melanogaster Kc167 cells.</title>
        <authorList>
            <person name="Bodenmiller B."/>
            <person name="Mueller L.N."/>
            <person name="Pedrioli P.G.A."/>
            <person name="Pflieger D."/>
            <person name="Juenger M.A."/>
            <person name="Eng J.K."/>
            <person name="Aebersold R."/>
            <person name="Tao W.A."/>
        </authorList>
    </citation>
    <scope>PHOSPHORYLATION [LARGE SCALE ANALYSIS] AT SER-536</scope>
    <scope>IDENTIFICATION BY MASS SPECTROMETRY</scope>
</reference>
<accession>O97477</accession>
<accession>Q8IGW1</accession>
<accession>Q8MR42</accession>
<proteinExistence type="evidence at protein level"/>
<protein>
    <recommendedName>
        <fullName>Inositol-3-phosphate synthase</fullName>
        <shortName>MIP synthase</shortName>
        <ecNumber evidence="5">5.5.1.4</ecNumber>
    </recommendedName>
    <alternativeName>
        <fullName>Myo-inositol 1-phosphate synthase</fullName>
        <shortName>IPS</shortName>
        <shortName>MI-1-P synthase</shortName>
    </alternativeName>
</protein>
<comment type="function">
    <text evidence="2 5">Key enzyme in myo-inositol biosynthesis pathway that catalyzes the conversion of glucose 6-phosphate to 1-myo-inositol 1-phosphate in a NAD-dependent manner (PubMed:11121586). Rate-limiting enzyme in the synthesis of all inositol-containing compounds (By similarity).</text>
</comment>
<comment type="catalytic activity">
    <reaction evidence="5">
        <text>D-glucose 6-phosphate = 1D-myo-inositol 3-phosphate</text>
        <dbReference type="Rhea" id="RHEA:10716"/>
        <dbReference type="ChEBI" id="CHEBI:58401"/>
        <dbReference type="ChEBI" id="CHEBI:61548"/>
        <dbReference type="EC" id="5.5.1.4"/>
    </reaction>
</comment>
<comment type="cofactor">
    <cofactor evidence="1">
        <name>NAD(+)</name>
        <dbReference type="ChEBI" id="CHEBI:57540"/>
    </cofactor>
</comment>
<comment type="pathway">
    <text>Polyol metabolism; myo-inositol biosynthesis; myo-inositol from D-glucose 6-phosphate: step 1/2.</text>
</comment>
<comment type="subcellular location">
    <subcellularLocation>
        <location evidence="1">Cytoplasm</location>
    </subcellularLocation>
</comment>
<comment type="tissue specificity">
    <text evidence="5">Higher expression in adult heads than bodies.</text>
</comment>
<comment type="similarity">
    <text evidence="8">Belongs to the myo-inositol 1-phosphate synthase family.</text>
</comment>
<gene>
    <name type="primary">Inos</name>
    <name type="ORF">CG11143</name>
</gene>
<dbReference type="EC" id="5.5.1.4" evidence="5"/>
<dbReference type="EMBL" id="AF071103">
    <property type="protein sequence ID" value="AAD02819.1"/>
    <property type="molecule type" value="mRNA"/>
</dbReference>
<dbReference type="EMBL" id="AF071104">
    <property type="protein sequence ID" value="AAD13140.1"/>
    <property type="molecule type" value="Genomic_DNA"/>
</dbReference>
<dbReference type="EMBL" id="AE013599">
    <property type="protein sequence ID" value="AAF59252.1"/>
    <property type="molecule type" value="Genomic_DNA"/>
</dbReference>
<dbReference type="EMBL" id="AY122137">
    <property type="protein sequence ID" value="AAM52649.1"/>
    <property type="molecule type" value="mRNA"/>
</dbReference>
<dbReference type="EMBL" id="BT001560">
    <property type="protein sequence ID" value="AAN71315.1"/>
    <property type="status" value="ALT_SEQ"/>
    <property type="molecule type" value="mRNA"/>
</dbReference>
<dbReference type="EMBL" id="BT001772">
    <property type="protein sequence ID" value="AAN71527.1"/>
    <property type="molecule type" value="mRNA"/>
</dbReference>
<dbReference type="RefSeq" id="NP_477405.1">
    <property type="nucleotide sequence ID" value="NM_058057.6"/>
</dbReference>
<dbReference type="SMR" id="O97477"/>
<dbReference type="BioGRID" id="61549">
    <property type="interactions" value="70"/>
</dbReference>
<dbReference type="FunCoup" id="O97477">
    <property type="interactions" value="1023"/>
</dbReference>
<dbReference type="IntAct" id="O97477">
    <property type="interactions" value="186"/>
</dbReference>
<dbReference type="STRING" id="7227.FBpp0088368"/>
<dbReference type="GlyGen" id="O97477">
    <property type="glycosylation" value="1 site, 1 O-linked glycan (1 site)"/>
</dbReference>
<dbReference type="iPTMnet" id="O97477"/>
<dbReference type="PaxDb" id="7227-FBpp0088368"/>
<dbReference type="DNASU" id="35671"/>
<dbReference type="EnsemblMetazoa" id="FBtr0089329">
    <property type="protein sequence ID" value="FBpp0088368"/>
    <property type="gene ID" value="FBgn0025885"/>
</dbReference>
<dbReference type="GeneID" id="35671"/>
<dbReference type="KEGG" id="dme:Dmel_CG11143"/>
<dbReference type="UCSC" id="CG11143-RA">
    <property type="organism name" value="d. melanogaster"/>
</dbReference>
<dbReference type="AGR" id="FB:FBgn0025885"/>
<dbReference type="CTD" id="35671"/>
<dbReference type="FlyBase" id="FBgn0025885">
    <property type="gene designation" value="Inos"/>
</dbReference>
<dbReference type="VEuPathDB" id="VectorBase:FBgn0025885"/>
<dbReference type="eggNOG" id="KOG0693">
    <property type="taxonomic scope" value="Eukaryota"/>
</dbReference>
<dbReference type="GeneTree" id="ENSGT00390000018395"/>
<dbReference type="HOGENOM" id="CLU_021486_2_0_1"/>
<dbReference type="InParanoid" id="O97477"/>
<dbReference type="OMA" id="VYVPMKE"/>
<dbReference type="OrthoDB" id="2887at2759"/>
<dbReference type="PhylomeDB" id="O97477"/>
<dbReference type="Reactome" id="R-DME-1855183">
    <property type="pathway name" value="Synthesis of IP2, IP, and Ins in the cytosol"/>
</dbReference>
<dbReference type="UniPathway" id="UPA00823">
    <property type="reaction ID" value="UER00787"/>
</dbReference>
<dbReference type="BioGRID-ORCS" id="35671">
    <property type="hits" value="0 hits in 1 CRISPR screen"/>
</dbReference>
<dbReference type="GenomeRNAi" id="35671"/>
<dbReference type="PRO" id="PR:O97477"/>
<dbReference type="Proteomes" id="UP000000803">
    <property type="component" value="Chromosome 2R"/>
</dbReference>
<dbReference type="Bgee" id="FBgn0025885">
    <property type="expression patterns" value="Expressed in seminal fluid secreting gland and 218 other cell types or tissues"/>
</dbReference>
<dbReference type="GO" id="GO:0005737">
    <property type="term" value="C:cytoplasm"/>
    <property type="evidence" value="ECO:0000250"/>
    <property type="project" value="FlyBase"/>
</dbReference>
<dbReference type="GO" id="GO:0004512">
    <property type="term" value="F:inositol-3-phosphate synthase activity"/>
    <property type="evidence" value="ECO:0000314"/>
    <property type="project" value="FlyBase"/>
</dbReference>
<dbReference type="GO" id="GO:0006021">
    <property type="term" value="P:inositol biosynthetic process"/>
    <property type="evidence" value="ECO:0000250"/>
    <property type="project" value="FlyBase"/>
</dbReference>
<dbReference type="GO" id="GO:0008654">
    <property type="term" value="P:phospholipid biosynthetic process"/>
    <property type="evidence" value="ECO:0007669"/>
    <property type="project" value="UniProtKB-KW"/>
</dbReference>
<dbReference type="FunFam" id="3.40.50.720:FF:000107">
    <property type="entry name" value="inositol-3-phosphate synthase"/>
    <property type="match status" value="1"/>
</dbReference>
<dbReference type="FunFam" id="3.40.50.720:FF:000069">
    <property type="entry name" value="Inositol-3-phosphate synthase 1"/>
    <property type="match status" value="1"/>
</dbReference>
<dbReference type="FunFam" id="3.30.360.10:FF:000055">
    <property type="entry name" value="Putative myo-inositol-1-phosphate synthase"/>
    <property type="match status" value="1"/>
</dbReference>
<dbReference type="Gene3D" id="3.40.50.720">
    <property type="entry name" value="NAD(P)-binding Rossmann-like Domain"/>
    <property type="match status" value="2"/>
</dbReference>
<dbReference type="InterPro" id="IPR002587">
    <property type="entry name" value="Myo-inos-1-P_Synthase"/>
</dbReference>
<dbReference type="InterPro" id="IPR013021">
    <property type="entry name" value="Myo-inos-1-P_Synthase_GAPDH"/>
</dbReference>
<dbReference type="InterPro" id="IPR036291">
    <property type="entry name" value="NAD(P)-bd_dom_sf"/>
</dbReference>
<dbReference type="PANTHER" id="PTHR11510">
    <property type="entry name" value="MYO-INOSITOL-1 PHOSPHATE SYNTHASE"/>
    <property type="match status" value="1"/>
</dbReference>
<dbReference type="Pfam" id="PF01658">
    <property type="entry name" value="Inos-1-P_synth"/>
    <property type="match status" value="1"/>
</dbReference>
<dbReference type="Pfam" id="PF07994">
    <property type="entry name" value="NAD_binding_5"/>
    <property type="match status" value="1"/>
</dbReference>
<dbReference type="PIRSF" id="PIRSF015578">
    <property type="entry name" value="Myoinos-ppht_syn"/>
    <property type="match status" value="1"/>
</dbReference>
<dbReference type="SUPFAM" id="SSF55347">
    <property type="entry name" value="Glyceraldehyde-3-phosphate dehydrogenase-like, C-terminal domain"/>
    <property type="match status" value="1"/>
</dbReference>
<dbReference type="SUPFAM" id="SSF51735">
    <property type="entry name" value="NAD(P)-binding Rossmann-fold domains"/>
    <property type="match status" value="1"/>
</dbReference>
<organism>
    <name type="scientific">Drosophila melanogaster</name>
    <name type="common">Fruit fly</name>
    <dbReference type="NCBI Taxonomy" id="7227"/>
    <lineage>
        <taxon>Eukaryota</taxon>
        <taxon>Metazoa</taxon>
        <taxon>Ecdysozoa</taxon>
        <taxon>Arthropoda</taxon>
        <taxon>Hexapoda</taxon>
        <taxon>Insecta</taxon>
        <taxon>Pterygota</taxon>
        <taxon>Neoptera</taxon>
        <taxon>Endopterygota</taxon>
        <taxon>Diptera</taxon>
        <taxon>Brachycera</taxon>
        <taxon>Muscomorpha</taxon>
        <taxon>Ephydroidea</taxon>
        <taxon>Drosophilidae</taxon>
        <taxon>Drosophila</taxon>
        <taxon>Sophophora</taxon>
    </lineage>
</organism>
<sequence>MKPTNNSTLEVISPKVQVDDEFITTDYDYQTSHVKRTADGQLQVHPQTTSLKIRTGRHVPKLGVMLVGWGGNNGSTLTAALEANRRQLKWRKRTGVQEANWYGSITQASTVFIGSDEDGGDVYVPMKELLPMVEPDNIIVDGWDISGLHLGDAMRRAEVLDVALQDQIYDQLAQLRPRPSIYDPDFIAANQSDRADNVIRGTRLEQYEQIRKDIRDFRERSGVDSVIVLWTANTERFADVQPGLNTTSQELIASLEANHSEVSPSTIFAMASIAEGCTYINGSPQNTFVPGLIQLAEEKNVFIAGDDFKSGQTKIKSVLVDFLVGAGIKPVSIASYNHLGNNDGKNLSAPQQFRSKEISKSNVVDDMVASNRLLYGPDEHPDHVVVIKYVPYVGDSKRAMDEYTSEIMMGGHNTLVIHNTCEDSLLATPLILDLVILGELSTRIQLRNAEKESAPWVPFKPVLSLLSYLCKAPLVPQGSQVVNSLFRQRAAIENILRGCIGLPPISHMTLEQRFDFSTITNEPPLKRVKILGQPCSVESVTNGKKLHANGHSNGSAKLATNGNGH</sequence>
<keyword id="KW-0963">Cytoplasm</keyword>
<keyword id="KW-0398">Inositol biosynthesis</keyword>
<keyword id="KW-0413">Isomerase</keyword>
<keyword id="KW-0444">Lipid biosynthesis</keyword>
<keyword id="KW-0443">Lipid metabolism</keyword>
<keyword id="KW-0520">NAD</keyword>
<keyword id="KW-0594">Phospholipid biosynthesis</keyword>
<keyword id="KW-1208">Phospholipid metabolism</keyword>
<keyword id="KW-0597">Phosphoprotein</keyword>
<keyword id="KW-1185">Reference proteome</keyword>
<name>INO1_DROME</name>
<feature type="chain" id="PRO_0000195182" description="Inositol-3-phosphate synthase">
    <location>
        <begin position="1"/>
        <end position="565"/>
    </location>
</feature>
<feature type="region of interest" description="Disordered" evidence="3">
    <location>
        <begin position="546"/>
        <end position="565"/>
    </location>
</feature>
<feature type="compositionally biased region" description="Polar residues" evidence="3">
    <location>
        <begin position="550"/>
        <end position="565"/>
    </location>
</feature>
<feature type="binding site" evidence="1">
    <location>
        <position position="70"/>
    </location>
    <ligand>
        <name>NAD(+)</name>
        <dbReference type="ChEBI" id="CHEBI:57540"/>
    </ligand>
</feature>
<feature type="binding site" evidence="1">
    <location>
        <position position="71"/>
    </location>
    <ligand>
        <name>NAD(+)</name>
        <dbReference type="ChEBI" id="CHEBI:57540"/>
    </ligand>
</feature>
<feature type="binding site" evidence="1">
    <location>
        <position position="72"/>
    </location>
    <ligand>
        <name>NAD(+)</name>
        <dbReference type="ChEBI" id="CHEBI:57540"/>
    </ligand>
</feature>
<feature type="binding site" evidence="1">
    <location>
        <position position="73"/>
    </location>
    <ligand>
        <name>NAD(+)</name>
        <dbReference type="ChEBI" id="CHEBI:57540"/>
    </ligand>
</feature>
<feature type="binding site" evidence="1">
    <location>
        <position position="144"/>
    </location>
    <ligand>
        <name>NAD(+)</name>
        <dbReference type="ChEBI" id="CHEBI:57540"/>
    </ligand>
</feature>
<feature type="binding site" evidence="1">
    <location>
        <position position="180"/>
    </location>
    <ligand>
        <name>NAD(+)</name>
        <dbReference type="ChEBI" id="CHEBI:57540"/>
    </ligand>
</feature>
<feature type="binding site" evidence="1">
    <location>
        <position position="181"/>
    </location>
    <ligand>
        <name>NAD(+)</name>
        <dbReference type="ChEBI" id="CHEBI:57540"/>
    </ligand>
</feature>
<feature type="binding site" evidence="1">
    <location>
        <position position="191"/>
    </location>
    <ligand>
        <name>NAD(+)</name>
        <dbReference type="ChEBI" id="CHEBI:57540"/>
    </ligand>
</feature>
<feature type="binding site" evidence="1">
    <location>
        <position position="194"/>
    </location>
    <ligand>
        <name>NAD(+)</name>
        <dbReference type="ChEBI" id="CHEBI:57540"/>
    </ligand>
</feature>
<feature type="binding site" evidence="1">
    <location>
        <position position="231"/>
    </location>
    <ligand>
        <name>NAD(+)</name>
        <dbReference type="ChEBI" id="CHEBI:57540"/>
    </ligand>
</feature>
<feature type="binding site" evidence="1">
    <location>
        <position position="232"/>
    </location>
    <ligand>
        <name>NAD(+)</name>
        <dbReference type="ChEBI" id="CHEBI:57540"/>
    </ligand>
</feature>
<feature type="binding site" evidence="1">
    <location>
        <position position="233"/>
    </location>
    <ligand>
        <name>NAD(+)</name>
        <dbReference type="ChEBI" id="CHEBI:57540"/>
    </ligand>
</feature>
<feature type="binding site" evidence="1">
    <location>
        <position position="234"/>
    </location>
    <ligand>
        <name>NAD(+)</name>
        <dbReference type="ChEBI" id="CHEBI:57540"/>
    </ligand>
</feature>
<feature type="binding site" evidence="1">
    <location>
        <position position="282"/>
    </location>
    <ligand>
        <name>NAD(+)</name>
        <dbReference type="ChEBI" id="CHEBI:57540"/>
    </ligand>
</feature>
<feature type="binding site" evidence="1">
    <location>
        <position position="283"/>
    </location>
    <ligand>
        <name>NAD(+)</name>
        <dbReference type="ChEBI" id="CHEBI:57540"/>
    </ligand>
</feature>
<feature type="binding site" evidence="1">
    <location>
        <position position="307"/>
    </location>
    <ligand>
        <name>NAD(+)</name>
        <dbReference type="ChEBI" id="CHEBI:57540"/>
    </ligand>
</feature>
<feature type="binding site" evidence="1">
    <location>
        <position position="310"/>
    </location>
    <ligand>
        <name>NAD(+)</name>
        <dbReference type="ChEBI" id="CHEBI:57540"/>
    </ligand>
</feature>
<feature type="binding site" evidence="1">
    <location>
        <position position="341"/>
    </location>
    <ligand>
        <name>NAD(+)</name>
        <dbReference type="ChEBI" id="CHEBI:57540"/>
    </ligand>
</feature>
<feature type="binding site" evidence="1">
    <location>
        <position position="342"/>
    </location>
    <ligand>
        <name>NAD(+)</name>
        <dbReference type="ChEBI" id="CHEBI:57540"/>
    </ligand>
</feature>
<feature type="binding site" evidence="1">
    <location>
        <position position="343"/>
    </location>
    <ligand>
        <name>NAD(+)</name>
        <dbReference type="ChEBI" id="CHEBI:57540"/>
    </ligand>
</feature>
<feature type="binding site" evidence="1">
    <location>
        <position position="356"/>
    </location>
    <ligand>
        <name>NAD(+)</name>
        <dbReference type="ChEBI" id="CHEBI:57540"/>
    </ligand>
</feature>
<feature type="binding site" evidence="1">
    <location>
        <position position="394"/>
    </location>
    <ligand>
        <name>NAD(+)</name>
        <dbReference type="ChEBI" id="CHEBI:57540"/>
    </ligand>
</feature>
<feature type="binding site" evidence="1">
    <location>
        <position position="395"/>
    </location>
    <ligand>
        <name>NAD(+)</name>
        <dbReference type="ChEBI" id="CHEBI:57540"/>
    </ligand>
</feature>
<feature type="binding site" evidence="1">
    <location>
        <position position="423"/>
    </location>
    <ligand>
        <name>NAD(+)</name>
        <dbReference type="ChEBI" id="CHEBI:57540"/>
    </ligand>
</feature>
<feature type="binding site" evidence="1">
    <location>
        <position position="424"/>
    </location>
    <ligand>
        <name>NAD(+)</name>
        <dbReference type="ChEBI" id="CHEBI:57540"/>
    </ligand>
</feature>
<feature type="modified residue" description="Phosphoserine" evidence="7">
    <location>
        <position position="536"/>
    </location>
</feature>
<feature type="sequence conflict" description="In Ref. 4; AAN71315." evidence="8" ref="4">
    <original>V</original>
    <variation>L</variation>
    <location>
        <position position="324"/>
    </location>
</feature>
<evidence type="ECO:0000250" key="1">
    <source>
        <dbReference type="UniProtKB" id="P11986"/>
    </source>
</evidence>
<evidence type="ECO:0000250" key="2">
    <source>
        <dbReference type="UniProtKB" id="Q9NPH2"/>
    </source>
</evidence>
<evidence type="ECO:0000256" key="3">
    <source>
        <dbReference type="SAM" id="MobiDB-lite"/>
    </source>
</evidence>
<evidence type="ECO:0000269" key="4">
    <source>
    </source>
</evidence>
<evidence type="ECO:0000269" key="5">
    <source>
    </source>
</evidence>
<evidence type="ECO:0000269" key="6">
    <source>
    </source>
</evidence>
<evidence type="ECO:0000269" key="7">
    <source>
    </source>
</evidence>
<evidence type="ECO:0000305" key="8"/>